<proteinExistence type="evidence at protein level"/>
<name>PTLH_STRAW</name>
<comment type="function">
    <text evidence="2 3">Catalyzes the conversion of 1-deoxypentalenic acid to 11-beta-hydroxy-1-deoxypentalenic acid in the biosynthesis of neopentalenolactone antibiotic.</text>
</comment>
<comment type="catalytic activity">
    <reaction evidence="2 3">
        <text>1-deoxypentalenate + 2-oxoglutarate + O2 = 1-deoxy-11beta-hydroxypentalenate + succinate + CO2</text>
        <dbReference type="Rhea" id="RHEA:34619"/>
        <dbReference type="ChEBI" id="CHEBI:15379"/>
        <dbReference type="ChEBI" id="CHEBI:16526"/>
        <dbReference type="ChEBI" id="CHEBI:16810"/>
        <dbReference type="ChEBI" id="CHEBI:30031"/>
        <dbReference type="ChEBI" id="CHEBI:68650"/>
        <dbReference type="ChEBI" id="CHEBI:70779"/>
        <dbReference type="EC" id="1.14.11.35"/>
    </reaction>
</comment>
<comment type="cofactor">
    <cofactor evidence="3">
        <name>Fe cation</name>
        <dbReference type="ChEBI" id="CHEBI:24875"/>
    </cofactor>
</comment>
<comment type="cofactor">
    <cofactor evidence="1">
        <name>L-ascorbate</name>
        <dbReference type="ChEBI" id="CHEBI:38290"/>
    </cofactor>
</comment>
<comment type="biophysicochemical properties">
    <kinetics>
        <KM evidence="2">0.57 mM for 1-deoxypentalenic acid</KM>
        <text>kcat is 4.2 sec(-1) with 1-deoxypentalenic acid.</text>
    </kinetics>
    <phDependence>
        <text evidence="2">Optimum pH is 6.0.</text>
    </phDependence>
</comment>
<comment type="pathway">
    <text evidence="4">Antibiotic biosynthesis; neopentalenolactone biosynthesis.</text>
</comment>
<comment type="miscellaneous">
    <text evidence="6">S.avermitilis does not produce pentalenolactone itself in vivo but instead a group of new metabolites that are neopentalenolactone derivatives.</text>
</comment>
<comment type="similarity">
    <text evidence="5">Belongs to the PhyH family.</text>
</comment>
<dbReference type="EC" id="1.14.11.35"/>
<dbReference type="EMBL" id="BA000030">
    <property type="protein sequence ID" value="BAC70702.2"/>
    <property type="molecule type" value="Genomic_DNA"/>
</dbReference>
<dbReference type="RefSeq" id="WP_037648981.1">
    <property type="nucleotide sequence ID" value="NZ_JZJK01000090.1"/>
</dbReference>
<dbReference type="PDB" id="2RDN">
    <property type="method" value="X-ray"/>
    <property type="resolution" value="1.35 A"/>
    <property type="chains" value="A=1-285"/>
</dbReference>
<dbReference type="PDB" id="2RDQ">
    <property type="method" value="X-ray"/>
    <property type="resolution" value="1.31 A"/>
    <property type="chains" value="A=1-285"/>
</dbReference>
<dbReference type="PDB" id="2RDR">
    <property type="method" value="X-ray"/>
    <property type="resolution" value="1.70 A"/>
    <property type="chains" value="A=1-285"/>
</dbReference>
<dbReference type="PDB" id="2RDS">
    <property type="method" value="X-ray"/>
    <property type="resolution" value="1.65 A"/>
    <property type="chains" value="A=1-285"/>
</dbReference>
<dbReference type="PDBsum" id="2RDN"/>
<dbReference type="PDBsum" id="2RDQ"/>
<dbReference type="PDBsum" id="2RDR"/>
<dbReference type="PDBsum" id="2RDS"/>
<dbReference type="SMR" id="Q82IZ1"/>
<dbReference type="DrugBank" id="DB06903">
    <property type="generic name" value="(1S,3aS,5aR,8aS)-1,7,7-trimethyl-1,2,3,3a,5a,6,7,8-octahydrocyclopenta[c]pentalene-4-carboxylic acid"/>
</dbReference>
<dbReference type="GeneID" id="41540073"/>
<dbReference type="KEGG" id="sma:SAVERM_2991"/>
<dbReference type="eggNOG" id="COG5285">
    <property type="taxonomic scope" value="Bacteria"/>
</dbReference>
<dbReference type="HOGENOM" id="CLU_948969_0_0_11"/>
<dbReference type="OrthoDB" id="183023at2"/>
<dbReference type="BioCyc" id="MetaCyc:MONOMER-16835"/>
<dbReference type="BRENDA" id="1.14.11.35">
    <property type="organism ID" value="5980"/>
</dbReference>
<dbReference type="UniPathway" id="UPA01021"/>
<dbReference type="EvolutionaryTrace" id="Q82IZ1"/>
<dbReference type="Proteomes" id="UP000000428">
    <property type="component" value="Chromosome"/>
</dbReference>
<dbReference type="GO" id="GO:0016706">
    <property type="term" value="F:2-oxoglutarate-dependent dioxygenase activity"/>
    <property type="evidence" value="ECO:0000314"/>
    <property type="project" value="UniProtKB"/>
</dbReference>
<dbReference type="GO" id="GO:0005506">
    <property type="term" value="F:iron ion binding"/>
    <property type="evidence" value="ECO:0000314"/>
    <property type="project" value="UniProtKB"/>
</dbReference>
<dbReference type="GO" id="GO:0031418">
    <property type="term" value="F:L-ascorbic acid binding"/>
    <property type="evidence" value="ECO:0007669"/>
    <property type="project" value="UniProtKB-KW"/>
</dbReference>
<dbReference type="GO" id="GO:0017000">
    <property type="term" value="P:antibiotic biosynthetic process"/>
    <property type="evidence" value="ECO:0000314"/>
    <property type="project" value="UniProtKB"/>
</dbReference>
<dbReference type="GO" id="GO:1901336">
    <property type="term" value="P:lactone biosynthetic process"/>
    <property type="evidence" value="ECO:0000314"/>
    <property type="project" value="UniProtKB"/>
</dbReference>
<dbReference type="Gene3D" id="2.60.120.620">
    <property type="entry name" value="q2cbj1_9rhob like domain"/>
    <property type="match status" value="1"/>
</dbReference>
<dbReference type="InterPro" id="IPR054971">
    <property type="entry name" value="DxPntBtaHylase"/>
</dbReference>
<dbReference type="InterPro" id="IPR008775">
    <property type="entry name" value="Phytyl_CoA_dOase-like"/>
</dbReference>
<dbReference type="NCBIfam" id="NF045813">
    <property type="entry name" value="DxPntBtaHylase"/>
    <property type="match status" value="1"/>
</dbReference>
<dbReference type="PANTHER" id="PTHR20883:SF14">
    <property type="entry name" value="PHYTANOYL-COA DIOXYGENASE"/>
    <property type="match status" value="1"/>
</dbReference>
<dbReference type="PANTHER" id="PTHR20883">
    <property type="entry name" value="PHYTANOYL-COA DIOXYGENASE DOMAIN CONTAINING 1"/>
    <property type="match status" value="1"/>
</dbReference>
<dbReference type="Pfam" id="PF05721">
    <property type="entry name" value="PhyH"/>
    <property type="match status" value="1"/>
</dbReference>
<dbReference type="SUPFAM" id="SSF51197">
    <property type="entry name" value="Clavaminate synthase-like"/>
    <property type="match status" value="1"/>
</dbReference>
<reference key="1">
    <citation type="journal article" date="2001" name="Proc. Natl. Acad. Sci. U.S.A.">
        <title>Genome sequence of an industrial microorganism Streptomyces avermitilis: deducing the ability of producing secondary metabolites.</title>
        <authorList>
            <person name="Omura S."/>
            <person name="Ikeda H."/>
            <person name="Ishikawa J."/>
            <person name="Hanamoto A."/>
            <person name="Takahashi C."/>
            <person name="Shinose M."/>
            <person name="Takahashi Y."/>
            <person name="Horikawa H."/>
            <person name="Nakazawa H."/>
            <person name="Osonoe T."/>
            <person name="Kikuchi H."/>
            <person name="Shiba T."/>
            <person name="Sakaki Y."/>
            <person name="Hattori M."/>
        </authorList>
    </citation>
    <scope>NUCLEOTIDE SEQUENCE [LARGE SCALE GENOMIC DNA]</scope>
    <source>
        <strain>ATCC 31267 / DSM 46492 / JCM 5070 / NBRC 14893 / NCIMB 12804 / NRRL 8165 / MA-4680</strain>
    </source>
</reference>
<reference key="2">
    <citation type="journal article" date="2003" name="Nat. Biotechnol.">
        <title>Complete genome sequence and comparative analysis of the industrial microorganism Streptomyces avermitilis.</title>
        <authorList>
            <person name="Ikeda H."/>
            <person name="Ishikawa J."/>
            <person name="Hanamoto A."/>
            <person name="Shinose M."/>
            <person name="Kikuchi H."/>
            <person name="Shiba T."/>
            <person name="Sakaki Y."/>
            <person name="Hattori M."/>
            <person name="Omura S."/>
        </authorList>
    </citation>
    <scope>NUCLEOTIDE SEQUENCE [LARGE SCALE GENOMIC DNA]</scope>
    <source>
        <strain>ATCC 31267 / DSM 46492 / JCM 5070 / NBRC 14893 / NCIMB 12804 / NRRL 8165 / MA-4680</strain>
    </source>
</reference>
<reference key="3">
    <citation type="journal article" date="2006" name="J. Am. Chem. Soc.">
        <title>Pentalenolactone biosynthesis. Molecular cloning and assignment of biochemical function to PtlH, a non-heme iron dioxygenase of Streptomyces avermitilis.</title>
        <authorList>
            <person name="You Z."/>
            <person name="Omura S."/>
            <person name="Ikeda H."/>
            <person name="Cane D.E."/>
        </authorList>
    </citation>
    <scope>FUNCTION</scope>
    <scope>CATALYTIC ACTIVITY</scope>
    <scope>BIOPHYSICOCHEMICAL PROPERTIES</scope>
    <source>
        <strain>ATCC 31267 / DSM 46492 / JCM 5070 / NBRC 14893 / NCIMB 12804 / NRRL 8165 / MA-4680</strain>
    </source>
</reference>
<reference key="4">
    <citation type="journal article" date="2011" name="Biochemistry">
        <title>Genome mining in Streptomyces. Elucidation of the role of Baeyer-Villiger monooxygenases and non-heme iron-dependent dehydrogenase/oxygenases in the final steps of the biosynthesis of pentalenolactone and neopentalenolactone.</title>
        <authorList>
            <person name="Seo M.J."/>
            <person name="Zhu D."/>
            <person name="Endo S."/>
            <person name="Ikeda H."/>
            <person name="Cane D.E."/>
        </authorList>
    </citation>
    <scope>PATHWAY</scope>
    <source>
        <strain>ATCC 31267 / DSM 46492 / JCM 5070 / NBRC 14893 / NCIMB 12804 / NRRL 8165 / MA-4680</strain>
    </source>
</reference>
<reference key="5">
    <citation type="journal article" date="2007" name="J. Biol. Chem.">
        <title>Crystal structure of the non-heme iron dioxygenase PtlH in pentalenolactone biosynthesis.</title>
        <authorList>
            <person name="You Z."/>
            <person name="Omura S."/>
            <person name="Ikeda H."/>
            <person name="Cane D.E."/>
            <person name="Jogl G."/>
        </authorList>
    </citation>
    <scope>X-RAY CRYSTALLOGRAPHY (1.31 ANGSTROMS) IN COMPLEX WITH IRON; ALPHA-KETOGLUTARATE AND ENT-1-DEOXYPENTALENIC ACID</scope>
    <scope>FUNCTION</scope>
    <scope>CATALYTIC ACTIVITY</scope>
    <scope>COFACTOR</scope>
    <scope>MUTAGENESIS OF ARG-117 AND ARG-188</scope>
    <source>
        <strain>ATCC 31267 / DSM 46492 / JCM 5070 / NBRC 14893 / NCIMB 12804 / NRRL 8165 / MA-4680</strain>
    </source>
</reference>
<evidence type="ECO:0000250" key="1"/>
<evidence type="ECO:0000269" key="2">
    <source>
    </source>
</evidence>
<evidence type="ECO:0000269" key="3">
    <source>
    </source>
</evidence>
<evidence type="ECO:0000269" key="4">
    <source>
    </source>
</evidence>
<evidence type="ECO:0000305" key="5"/>
<evidence type="ECO:0000305" key="6">
    <source>
    </source>
</evidence>
<evidence type="ECO:0007829" key="7">
    <source>
        <dbReference type="PDB" id="2RDN"/>
    </source>
</evidence>
<evidence type="ECO:0007829" key="8">
    <source>
        <dbReference type="PDB" id="2RDQ"/>
    </source>
</evidence>
<feature type="chain" id="PRO_0000422000" description="1-deoxypentalenic acid 11-beta-hydroxylase">
    <location>
        <begin position="1"/>
        <end position="285"/>
    </location>
</feature>
<feature type="binding site">
    <location>
        <position position="117"/>
    </location>
    <ligand>
        <name>substrate</name>
    </ligand>
</feature>
<feature type="binding site">
    <location>
        <begin position="137"/>
        <end position="139"/>
    </location>
    <ligand>
        <name>2-oxoglutarate</name>
        <dbReference type="ChEBI" id="CHEBI:16810"/>
    </ligand>
</feature>
<feature type="binding site" evidence="3">
    <location>
        <position position="137"/>
    </location>
    <ligand>
        <name>Fe cation</name>
        <dbReference type="ChEBI" id="CHEBI:24875"/>
    </ligand>
</feature>
<feature type="binding site" evidence="3">
    <location>
        <position position="139"/>
    </location>
    <ligand>
        <name>Fe cation</name>
        <dbReference type="ChEBI" id="CHEBI:24875"/>
    </ligand>
</feature>
<feature type="binding site" evidence="3">
    <location>
        <position position="153"/>
    </location>
    <ligand>
        <name>2-oxoglutarate</name>
        <dbReference type="ChEBI" id="CHEBI:16810"/>
    </ligand>
</feature>
<feature type="binding site">
    <location>
        <position position="188"/>
    </location>
    <ligand>
        <name>substrate</name>
    </ligand>
</feature>
<feature type="binding site" evidence="3">
    <location>
        <position position="226"/>
    </location>
    <ligand>
        <name>Fe cation</name>
        <dbReference type="ChEBI" id="CHEBI:24875"/>
    </ligand>
</feature>
<feature type="binding site" evidence="3">
    <location>
        <position position="228"/>
    </location>
    <ligand>
        <name>2-oxoglutarate</name>
        <dbReference type="ChEBI" id="CHEBI:16810"/>
    </ligand>
</feature>
<feature type="binding site" evidence="3">
    <location>
        <position position="240"/>
    </location>
    <ligand>
        <name>2-oxoglutarate</name>
        <dbReference type="ChEBI" id="CHEBI:16810"/>
    </ligand>
</feature>
<feature type="mutagenesis site" description="Abolishes 1-deoxypentalenic acid 11-beta-hydroxylase activity." evidence="3">
    <original>R</original>
    <variation>Q</variation>
    <location>
        <position position="117"/>
    </location>
</feature>
<feature type="mutagenesis site" description="Strong reduction of 1-deoxypentalenic acid 11-beta-hydroxylase activity." evidence="3">
    <original>R</original>
    <variation>Q</variation>
    <location>
        <position position="188"/>
    </location>
</feature>
<feature type="helix" evidence="8">
    <location>
        <begin position="12"/>
        <end position="14"/>
    </location>
</feature>
<feature type="helix" evidence="8">
    <location>
        <begin position="18"/>
        <end position="28"/>
    </location>
</feature>
<feature type="strand" evidence="8">
    <location>
        <begin position="29"/>
        <end position="33"/>
    </location>
</feature>
<feature type="helix" evidence="8">
    <location>
        <begin position="39"/>
        <end position="56"/>
    </location>
</feature>
<feature type="turn" evidence="8">
    <location>
        <begin position="65"/>
        <end position="67"/>
    </location>
</feature>
<feature type="helix" evidence="8">
    <location>
        <begin position="78"/>
        <end position="84"/>
    </location>
</feature>
<feature type="helix" evidence="8">
    <location>
        <begin position="87"/>
        <end position="91"/>
    </location>
</feature>
<feature type="helix" evidence="8">
    <location>
        <begin position="94"/>
        <end position="104"/>
    </location>
</feature>
<feature type="strand" evidence="8">
    <location>
        <begin position="108"/>
        <end position="119"/>
    </location>
</feature>
<feature type="helix" evidence="8">
    <location>
        <begin position="139"/>
        <end position="142"/>
    </location>
</feature>
<feature type="strand" evidence="8">
    <location>
        <begin position="150"/>
        <end position="157"/>
    </location>
</feature>
<feature type="turn" evidence="8">
    <location>
        <begin position="161"/>
        <end position="163"/>
    </location>
</feature>
<feature type="strand" evidence="8">
    <location>
        <begin position="165"/>
        <end position="169"/>
    </location>
</feature>
<feature type="turn" evidence="8">
    <location>
        <begin position="170"/>
        <end position="173"/>
    </location>
</feature>
<feature type="strand" evidence="8">
    <location>
        <begin position="181"/>
        <end position="188"/>
    </location>
</feature>
<feature type="strand" evidence="8">
    <location>
        <begin position="191"/>
        <end position="195"/>
    </location>
</feature>
<feature type="helix" evidence="8">
    <location>
        <begin position="198"/>
        <end position="200"/>
    </location>
</feature>
<feature type="strand" evidence="8">
    <location>
        <begin position="217"/>
        <end position="221"/>
    </location>
</feature>
<feature type="strand" evidence="8">
    <location>
        <begin position="226"/>
        <end position="229"/>
    </location>
</feature>
<feature type="strand" evidence="8">
    <location>
        <begin position="240"/>
        <end position="249"/>
    </location>
</feature>
<feature type="helix" evidence="8">
    <location>
        <begin position="256"/>
        <end position="259"/>
    </location>
</feature>
<feature type="helix" evidence="8">
    <location>
        <begin position="262"/>
        <end position="265"/>
    </location>
</feature>
<feature type="helix" evidence="7">
    <location>
        <begin position="273"/>
        <end position="275"/>
    </location>
</feature>
<accession>Q82IZ1</accession>
<keyword id="KW-0002">3D-structure</keyword>
<keyword id="KW-0045">Antibiotic biosynthesis</keyword>
<keyword id="KW-0223">Dioxygenase</keyword>
<keyword id="KW-0408">Iron</keyword>
<keyword id="KW-0479">Metal-binding</keyword>
<keyword id="KW-0560">Oxidoreductase</keyword>
<keyword id="KW-1185">Reference proteome</keyword>
<keyword id="KW-0847">Vitamin C</keyword>
<protein>
    <recommendedName>
        <fullName>1-deoxypentalenic acid 11-beta-hydroxylase</fullName>
        <ecNumber>1.14.11.35</ecNumber>
    </recommendedName>
    <alternativeName>
        <fullName>Neopentalenolactone biosynthesis protein H</fullName>
    </alternativeName>
</protein>
<sequence length="285" mass="32264">MTNVTGDYTDCTPLLGDRAALDSFYEEHGYLFLRNVLDRDLVKTVAEQMREGLVALGAADPHATLEELTIDSFESVDEVAMHDYVKYDAFWNNPSTIKVFEQVFGEPVFVFLSTTIRYYPSQAGSEEPSFHYLTPFHQDGFYIGPNQDFRTFWIPLIRTTRESGGVALADGSHRRGKRDHVLNESFRRFGHPVRGIPPTEVSEDEHLLHSPMEPGDILLFHAHMCHKSIPNLSKDPRLMRMSMDTRVQPAKSHRGFNAMTPWTESAKDASKGIMAKITGTPTDVE</sequence>
<gene>
    <name type="primary">ptlH</name>
    <name type="ordered locus">SAV_2991</name>
</gene>
<organism>
    <name type="scientific">Streptomyces avermitilis (strain ATCC 31267 / DSM 46492 / JCM 5070 / NBRC 14893 / NCIMB 12804 / NRRL 8165 / MA-4680)</name>
    <dbReference type="NCBI Taxonomy" id="227882"/>
    <lineage>
        <taxon>Bacteria</taxon>
        <taxon>Bacillati</taxon>
        <taxon>Actinomycetota</taxon>
        <taxon>Actinomycetes</taxon>
        <taxon>Kitasatosporales</taxon>
        <taxon>Streptomycetaceae</taxon>
        <taxon>Streptomyces</taxon>
    </lineage>
</organism>